<gene>
    <name evidence="1" type="primary">hflX</name>
    <name type="ordered locus">b4173</name>
    <name type="ordered locus">JW4131</name>
</gene>
<reference key="1">
    <citation type="journal article" date="1993" name="Proc. Natl. Acad. Sci. U.S.A.">
        <title>The Escherichia coli hflA locus encodes a putative GTP-binding protein and two membrane proteins, one of which contains a protease-like domain.</title>
        <authorList>
            <person name="Noble J.A."/>
            <person name="Innis M.A."/>
            <person name="Koonin E.V."/>
            <person name="Rudd K.E."/>
            <person name="Banuett F."/>
            <person name="Herskowitz I."/>
        </authorList>
    </citation>
    <scope>NUCLEOTIDE SEQUENCE [GENOMIC DNA]</scope>
</reference>
<reference key="2">
    <citation type="journal article" date="1995" name="Nucleic Acids Res.">
        <title>Analysis of the Escherichia coli genome VI: DNA sequence of the region from 92.8 through 100 minutes.</title>
        <authorList>
            <person name="Burland V.D."/>
            <person name="Plunkett G. III"/>
            <person name="Sofia H.J."/>
            <person name="Daniels D.L."/>
            <person name="Blattner F.R."/>
        </authorList>
    </citation>
    <scope>NUCLEOTIDE SEQUENCE [LARGE SCALE GENOMIC DNA]</scope>
    <source>
        <strain>K12 / MG1655 / ATCC 47076</strain>
    </source>
</reference>
<reference key="3">
    <citation type="journal article" date="1997" name="Science">
        <title>The complete genome sequence of Escherichia coli K-12.</title>
        <authorList>
            <person name="Blattner F.R."/>
            <person name="Plunkett G. III"/>
            <person name="Bloch C.A."/>
            <person name="Perna N.T."/>
            <person name="Burland V."/>
            <person name="Riley M."/>
            <person name="Collado-Vides J."/>
            <person name="Glasner J.D."/>
            <person name="Rode C.K."/>
            <person name="Mayhew G.F."/>
            <person name="Gregor J."/>
            <person name="Davis N.W."/>
            <person name="Kirkpatrick H.A."/>
            <person name="Goeden M.A."/>
            <person name="Rose D.J."/>
            <person name="Mau B."/>
            <person name="Shao Y."/>
        </authorList>
    </citation>
    <scope>NUCLEOTIDE SEQUENCE [LARGE SCALE GENOMIC DNA]</scope>
    <source>
        <strain>K12 / MG1655 / ATCC 47076</strain>
    </source>
</reference>
<reference key="4">
    <citation type="journal article" date="2006" name="Mol. Syst. Biol.">
        <title>Highly accurate genome sequences of Escherichia coli K-12 strains MG1655 and W3110.</title>
        <authorList>
            <person name="Hayashi K."/>
            <person name="Morooka N."/>
            <person name="Yamamoto Y."/>
            <person name="Fujita K."/>
            <person name="Isono K."/>
            <person name="Choi S."/>
            <person name="Ohtsubo E."/>
            <person name="Baba T."/>
            <person name="Wanner B.L."/>
            <person name="Mori H."/>
            <person name="Horiuchi T."/>
        </authorList>
    </citation>
    <scope>NUCLEOTIDE SEQUENCE [LARGE SCALE GENOMIC DNA]</scope>
    <source>
        <strain>K12 / W3110 / ATCC 27325 / DSM 5911</strain>
    </source>
</reference>
<reference key="5">
    <citation type="journal article" date="1991" name="Nucleic Acids Res.">
        <title>Identification and sequence determination of the host factor gene for bacteriophage Q beta.</title>
        <authorList>
            <person name="Kajitani M."/>
            <person name="Ishihama A."/>
        </authorList>
    </citation>
    <scope>NUCLEOTIDE SEQUENCE [GENOMIC DNA] OF 1-56</scope>
</reference>
<reference key="6">
    <citation type="journal article" date="1987" name="J. Bacteriol.">
        <title>Identification of polypeptides encoded by an Escherichia coli locus (hflA) that governs the lysis-lysogeny decision of bacteriophage lambda.</title>
        <authorList>
            <person name="Banuett F."/>
            <person name="Herskowitz I."/>
        </authorList>
    </citation>
    <scope>PRELIMINARY FUNCTION</scope>
</reference>
<reference key="7">
    <citation type="journal article" date="2009" name="Biochem. Biophys. Res. Commun.">
        <title>E. coli HflX interacts with 50S ribosomal subunits in presence of nucleotides.</title>
        <authorList>
            <person name="Jain N."/>
            <person name="Dhimole N."/>
            <person name="Khan A.R."/>
            <person name="De D."/>
            <person name="Tomar S.K."/>
            <person name="Sajish M."/>
            <person name="Dutta D."/>
            <person name="Parrack P."/>
            <person name="Prakash B."/>
        </authorList>
    </citation>
    <scope>FUNCTION</scope>
    <scope>ACTIVITY REGULATION</scope>
    <scope>SUBUNIT</scope>
    <scope>INTERACTION WITH 50S SUBUNIT</scope>
    <scope>DOMAIN</scope>
</reference>
<reference key="8">
    <citation type="journal article" date="2009" name="Biochemistry">
        <title>Toward understanding the function of the universally conserved GTPase HflX from Escherichia coli: a kinetic approach.</title>
        <authorList>
            <person name="Shields M.J."/>
            <person name="Fischer J.J."/>
            <person name="Wieden H.J."/>
        </authorList>
    </citation>
    <scope>FUNCTION</scope>
    <scope>ACTIVITY REGULATION</scope>
</reference>
<reference key="9">
    <citation type="journal article" date="2009" name="J. Bacteriol.">
        <title>Properties of HflX, an enigmatic protein from Escherichia coli.</title>
        <authorList>
            <person name="Dutta D."/>
            <person name="Bandyopadhyay K."/>
            <person name="Datta A.B."/>
            <person name="Sardesai A.A."/>
            <person name="Parrack P."/>
        </authorList>
    </citation>
    <scope>FUNCTION AS A GTPASE</scope>
    <scope>ACTIVITY REGULATION</scope>
    <scope>SUBUNIT</scope>
    <scope>SUBCELLULAR LOCATION</scope>
    <scope>DISRUPTION PHENOTYPE</scope>
    <source>
        <strain>K12</strain>
    </source>
</reference>
<feature type="chain" id="PRO_0000122463" description="GTPase HflX">
    <location>
        <begin position="1"/>
        <end position="426"/>
    </location>
</feature>
<feature type="domain" description="Hflx-type G" evidence="1">
    <location>
        <begin position="198"/>
        <end position="365"/>
    </location>
</feature>
<feature type="binding site" evidence="1">
    <location>
        <begin position="204"/>
        <end position="211"/>
    </location>
    <ligand>
        <name>GTP</name>
        <dbReference type="ChEBI" id="CHEBI:37565"/>
    </ligand>
</feature>
<feature type="binding site" evidence="1">
    <location>
        <position position="211"/>
    </location>
    <ligand>
        <name>Mg(2+)</name>
        <dbReference type="ChEBI" id="CHEBI:18420"/>
    </ligand>
</feature>
<feature type="binding site" evidence="1">
    <location>
        <begin position="229"/>
        <end position="233"/>
    </location>
    <ligand>
        <name>GTP</name>
        <dbReference type="ChEBI" id="CHEBI:37565"/>
    </ligand>
</feature>
<feature type="binding site" evidence="1">
    <location>
        <position position="231"/>
    </location>
    <ligand>
        <name>Mg(2+)</name>
        <dbReference type="ChEBI" id="CHEBI:18420"/>
    </ligand>
</feature>
<feature type="binding site" evidence="1">
    <location>
        <begin position="251"/>
        <end position="254"/>
    </location>
    <ligand>
        <name>GTP</name>
        <dbReference type="ChEBI" id="CHEBI:37565"/>
    </ligand>
</feature>
<feature type="binding site" evidence="1">
    <location>
        <begin position="317"/>
        <end position="320"/>
    </location>
    <ligand>
        <name>GTP</name>
        <dbReference type="ChEBI" id="CHEBI:37565"/>
    </ligand>
</feature>
<feature type="binding site" evidence="1">
    <location>
        <begin position="343"/>
        <end position="345"/>
    </location>
    <ligand>
        <name>GTP</name>
        <dbReference type="ChEBI" id="CHEBI:37565"/>
    </ligand>
</feature>
<feature type="sequence conflict" description="In Ref. 5; BAA00645." evidence="5" ref="5">
    <original>H</original>
    <variation>R</variation>
    <location>
        <position position="53"/>
    </location>
</feature>
<feature type="sequence conflict" description="In Ref. 5; BAA00645." evidence="5" ref="5">
    <original>Y</original>
    <variation>S</variation>
    <location>
        <position position="56"/>
    </location>
</feature>
<dbReference type="EMBL" id="U00005">
    <property type="protein sequence ID" value="AAC43398.1"/>
    <property type="molecule type" value="Unassigned_DNA"/>
</dbReference>
<dbReference type="EMBL" id="U14003">
    <property type="protein sequence ID" value="AAA97069.1"/>
    <property type="molecule type" value="Genomic_DNA"/>
</dbReference>
<dbReference type="EMBL" id="U00096">
    <property type="protein sequence ID" value="AAC77130.1"/>
    <property type="molecule type" value="Genomic_DNA"/>
</dbReference>
<dbReference type="EMBL" id="AP009048">
    <property type="protein sequence ID" value="BAE78174.1"/>
    <property type="molecule type" value="Genomic_DNA"/>
</dbReference>
<dbReference type="EMBL" id="D00743">
    <property type="protein sequence ID" value="BAA00645.1"/>
    <property type="status" value="ALT_FRAME"/>
    <property type="molecule type" value="Genomic_DNA"/>
</dbReference>
<dbReference type="PIR" id="S56398">
    <property type="entry name" value="S56398"/>
</dbReference>
<dbReference type="RefSeq" id="NP_418594.1">
    <property type="nucleotide sequence ID" value="NC_000913.3"/>
</dbReference>
<dbReference type="RefSeq" id="WP_000460362.1">
    <property type="nucleotide sequence ID" value="NZ_LN832404.1"/>
</dbReference>
<dbReference type="PDB" id="5ADY">
    <property type="method" value="EM"/>
    <property type="resolution" value="4.50 A"/>
    <property type="chains" value="6=1-426"/>
</dbReference>
<dbReference type="PDB" id="5ZZM">
    <property type="method" value="EM"/>
    <property type="resolution" value="8.10 A"/>
    <property type="chains" value="A=1-426"/>
</dbReference>
<dbReference type="PDB" id="7YLA">
    <property type="method" value="EM"/>
    <property type="resolution" value="2.52 A"/>
    <property type="chains" value="6=1-426"/>
</dbReference>
<dbReference type="PDB" id="8G31">
    <property type="method" value="EM"/>
    <property type="resolution" value="3.20 A"/>
    <property type="chains" value="6=1-426"/>
</dbReference>
<dbReference type="PDB" id="8G34">
    <property type="method" value="EM"/>
    <property type="resolution" value="3.20 A"/>
    <property type="chains" value="6=1-426"/>
</dbReference>
<dbReference type="PDB" id="8G38">
    <property type="method" value="EM"/>
    <property type="resolution" value="3.20 A"/>
    <property type="chains" value="6=1-426"/>
</dbReference>
<dbReference type="PDBsum" id="5ADY"/>
<dbReference type="PDBsum" id="5ZZM"/>
<dbReference type="PDBsum" id="7YLA"/>
<dbReference type="PDBsum" id="8G31"/>
<dbReference type="PDBsum" id="8G34"/>
<dbReference type="PDBsum" id="8G38"/>
<dbReference type="EMDB" id="EMD-3133"/>
<dbReference type="EMDB" id="EMD-33904"/>
<dbReference type="EMDB" id="EMD-6979"/>
<dbReference type="SMR" id="P25519"/>
<dbReference type="BioGRID" id="4261252">
    <property type="interactions" value="369"/>
</dbReference>
<dbReference type="BioGRID" id="852980">
    <property type="interactions" value="1"/>
</dbReference>
<dbReference type="DIP" id="DIP-9895N"/>
<dbReference type="FunCoup" id="P25519">
    <property type="interactions" value="691"/>
</dbReference>
<dbReference type="IntAct" id="P25519">
    <property type="interactions" value="1"/>
</dbReference>
<dbReference type="STRING" id="511145.b4173"/>
<dbReference type="jPOST" id="P25519"/>
<dbReference type="PaxDb" id="511145-b4173"/>
<dbReference type="EnsemblBacteria" id="AAC77130">
    <property type="protein sequence ID" value="AAC77130"/>
    <property type="gene ID" value="b4173"/>
</dbReference>
<dbReference type="GeneID" id="948688"/>
<dbReference type="KEGG" id="ecj:JW4131"/>
<dbReference type="KEGG" id="eco:b4173"/>
<dbReference type="KEGG" id="ecoc:C3026_22550"/>
<dbReference type="PATRIC" id="fig|1411691.4.peg.2528"/>
<dbReference type="EchoBASE" id="EB0432"/>
<dbReference type="eggNOG" id="COG2262">
    <property type="taxonomic scope" value="Bacteria"/>
</dbReference>
<dbReference type="HOGENOM" id="CLU_019597_2_1_6"/>
<dbReference type="InParanoid" id="P25519"/>
<dbReference type="OMA" id="VEHRKRY"/>
<dbReference type="OrthoDB" id="9812272at2"/>
<dbReference type="PhylomeDB" id="P25519"/>
<dbReference type="BioCyc" id="EcoCyc:EG10437-MONOMER"/>
<dbReference type="BioCyc" id="MetaCyc:EG10437-MONOMER"/>
<dbReference type="PRO" id="PR:P25519"/>
<dbReference type="Proteomes" id="UP000000625">
    <property type="component" value="Chromosome"/>
</dbReference>
<dbReference type="GO" id="GO:0005737">
    <property type="term" value="C:cytoplasm"/>
    <property type="evidence" value="ECO:0000314"/>
    <property type="project" value="EcoliWiki"/>
</dbReference>
<dbReference type="GO" id="GO:0005829">
    <property type="term" value="C:cytosol"/>
    <property type="evidence" value="ECO:0000314"/>
    <property type="project" value="EcoCyc"/>
</dbReference>
<dbReference type="GO" id="GO:0005524">
    <property type="term" value="F:ATP binding"/>
    <property type="evidence" value="ECO:0000314"/>
    <property type="project" value="EcoliWiki"/>
</dbReference>
<dbReference type="GO" id="GO:0016887">
    <property type="term" value="F:ATP hydrolysis activity"/>
    <property type="evidence" value="ECO:0000314"/>
    <property type="project" value="EcoCyc"/>
</dbReference>
<dbReference type="GO" id="GO:0005525">
    <property type="term" value="F:GTP binding"/>
    <property type="evidence" value="ECO:0000314"/>
    <property type="project" value="EcoCyc"/>
</dbReference>
<dbReference type="GO" id="GO:0003924">
    <property type="term" value="F:GTPase activity"/>
    <property type="evidence" value="ECO:0000314"/>
    <property type="project" value="EcoCyc"/>
</dbReference>
<dbReference type="GO" id="GO:0097216">
    <property type="term" value="F:guanosine tetraphosphate binding"/>
    <property type="evidence" value="ECO:0000314"/>
    <property type="project" value="EcoCyc"/>
</dbReference>
<dbReference type="GO" id="GO:0046872">
    <property type="term" value="F:metal ion binding"/>
    <property type="evidence" value="ECO:0007669"/>
    <property type="project" value="UniProtKB-KW"/>
</dbReference>
<dbReference type="GO" id="GO:0043023">
    <property type="term" value="F:ribosomal large subunit binding"/>
    <property type="evidence" value="ECO:0000314"/>
    <property type="project" value="EcoCyc"/>
</dbReference>
<dbReference type="GO" id="GO:0043022">
    <property type="term" value="F:ribosome binding"/>
    <property type="evidence" value="ECO:0000314"/>
    <property type="project" value="EcoCyc"/>
</dbReference>
<dbReference type="GO" id="GO:0019843">
    <property type="term" value="F:rRNA binding"/>
    <property type="evidence" value="ECO:0000314"/>
    <property type="project" value="EcoCyc"/>
</dbReference>
<dbReference type="GO" id="GO:0072344">
    <property type="term" value="P:rescue of stalled ribosome"/>
    <property type="evidence" value="ECO:0000314"/>
    <property type="project" value="EcoCyc"/>
</dbReference>
<dbReference type="GO" id="GO:0009408">
    <property type="term" value="P:response to heat"/>
    <property type="evidence" value="ECO:0000315"/>
    <property type="project" value="EcoCyc"/>
</dbReference>
<dbReference type="GO" id="GO:0032790">
    <property type="term" value="P:ribosome disassembly"/>
    <property type="evidence" value="ECO:0000314"/>
    <property type="project" value="EcoCyc"/>
</dbReference>
<dbReference type="CDD" id="cd01878">
    <property type="entry name" value="HflX"/>
    <property type="match status" value="1"/>
</dbReference>
<dbReference type="FunFam" id="3.40.50.11060:FF:000001">
    <property type="entry name" value="GTPase HflX"/>
    <property type="match status" value="1"/>
</dbReference>
<dbReference type="FunFam" id="3.40.50.300:FF:000173">
    <property type="entry name" value="GTPase HflX"/>
    <property type="match status" value="1"/>
</dbReference>
<dbReference type="Gene3D" id="6.10.250.2860">
    <property type="match status" value="1"/>
</dbReference>
<dbReference type="Gene3D" id="3.40.50.11060">
    <property type="entry name" value="GTPase HflX, N-terminal domain"/>
    <property type="match status" value="1"/>
</dbReference>
<dbReference type="Gene3D" id="3.40.50.300">
    <property type="entry name" value="P-loop containing nucleotide triphosphate hydrolases"/>
    <property type="match status" value="1"/>
</dbReference>
<dbReference type="HAMAP" id="MF_00900">
    <property type="entry name" value="GTPase_HflX"/>
    <property type="match status" value="1"/>
</dbReference>
<dbReference type="InterPro" id="IPR035647">
    <property type="entry name" value="EFG_III/V"/>
</dbReference>
<dbReference type="InterPro" id="IPR030394">
    <property type="entry name" value="G_HFLX_dom"/>
</dbReference>
<dbReference type="InterPro" id="IPR006073">
    <property type="entry name" value="GTP-bd"/>
</dbReference>
<dbReference type="InterPro" id="IPR032305">
    <property type="entry name" value="GTP-bd_M"/>
</dbReference>
<dbReference type="InterPro" id="IPR016496">
    <property type="entry name" value="GTPase_HflX"/>
</dbReference>
<dbReference type="InterPro" id="IPR025121">
    <property type="entry name" value="GTPase_HflX_N"/>
</dbReference>
<dbReference type="InterPro" id="IPR042108">
    <property type="entry name" value="GTPase_HflX_N_sf"/>
</dbReference>
<dbReference type="InterPro" id="IPR045498">
    <property type="entry name" value="HflX_C"/>
</dbReference>
<dbReference type="InterPro" id="IPR027417">
    <property type="entry name" value="P-loop_NTPase"/>
</dbReference>
<dbReference type="NCBIfam" id="TIGR03156">
    <property type="entry name" value="GTP_HflX"/>
    <property type="match status" value="1"/>
</dbReference>
<dbReference type="NCBIfam" id="NF008280">
    <property type="entry name" value="PRK11058.1"/>
    <property type="match status" value="1"/>
</dbReference>
<dbReference type="PANTHER" id="PTHR10229:SF0">
    <property type="entry name" value="GTP-BINDING PROTEIN 6-RELATED"/>
    <property type="match status" value="1"/>
</dbReference>
<dbReference type="PANTHER" id="PTHR10229">
    <property type="entry name" value="GTP-BINDING PROTEIN HFLX"/>
    <property type="match status" value="1"/>
</dbReference>
<dbReference type="Pfam" id="PF16360">
    <property type="entry name" value="GTP-bdg_M"/>
    <property type="match status" value="1"/>
</dbReference>
<dbReference type="Pfam" id="PF13167">
    <property type="entry name" value="GTP-bdg_N"/>
    <property type="match status" value="1"/>
</dbReference>
<dbReference type="Pfam" id="PF19275">
    <property type="entry name" value="HflX_C"/>
    <property type="match status" value="1"/>
</dbReference>
<dbReference type="Pfam" id="PF01926">
    <property type="entry name" value="MMR_HSR1"/>
    <property type="match status" value="1"/>
</dbReference>
<dbReference type="PIRSF" id="PIRSF006809">
    <property type="entry name" value="GTP-binding_hflX_prd"/>
    <property type="match status" value="1"/>
</dbReference>
<dbReference type="PRINTS" id="PR00326">
    <property type="entry name" value="GTP1OBG"/>
</dbReference>
<dbReference type="SUPFAM" id="SSF54980">
    <property type="entry name" value="EF-G C-terminal domain-like"/>
    <property type="match status" value="1"/>
</dbReference>
<dbReference type="SUPFAM" id="SSF52540">
    <property type="entry name" value="P-loop containing nucleoside triphosphate hydrolases"/>
    <property type="match status" value="1"/>
</dbReference>
<dbReference type="PROSITE" id="PS51705">
    <property type="entry name" value="G_HFLX"/>
    <property type="match status" value="1"/>
</dbReference>
<accession>P25519</accession>
<accession>Q2M6D2</accession>
<organism>
    <name type="scientific">Escherichia coli (strain K12)</name>
    <dbReference type="NCBI Taxonomy" id="83333"/>
    <lineage>
        <taxon>Bacteria</taxon>
        <taxon>Pseudomonadati</taxon>
        <taxon>Pseudomonadota</taxon>
        <taxon>Gammaproteobacteria</taxon>
        <taxon>Enterobacterales</taxon>
        <taxon>Enterobacteriaceae</taxon>
        <taxon>Escherichia</taxon>
    </lineage>
</organism>
<protein>
    <recommendedName>
        <fullName evidence="1">GTPase HflX</fullName>
    </recommendedName>
    <alternativeName>
        <fullName evidence="1">GTP-binding protein HflX</fullName>
    </alternativeName>
</protein>
<sequence>MFDRYDAGEQAVLVHIYFTQDKDMEDLQEFESLVSSAGVEALQVITGSRKAPHPKYFVGEGKAVEIAEAVKATGASVVLFDHALSPAQERNLERLCECRVIDRTGLILDIFAQRARTHEGKLQVELAQLRHLATRLVRGWTHLERQKGGIGLRGPGETQLETDRRLLRNRIVQIQSRLERVEKQREQGRQSRIKADVPTVSLVGYTNAGKSTLFNRITEARVYAADQLFATLDPTLRRIDVADVGETVLADTVGFIRHLPHDLVAAFKATLQETRQATLLLHVIDAADVRVQENIEAVNTVLEEIDAHEIPTLLVMNKIDMLEDFEPRIDRDEENKPNRVWLSAQTGAGIPQLFQALTERLSGEVAQHTLRLPPQEGRLRSRFYQLQAIEKEWMEEDGSVSLQVRMPIVDWRRLCKQEPALIDYLI</sequence>
<proteinExistence type="evidence at protein level"/>
<name>HFLX_ECOLI</name>
<keyword id="KW-0002">3D-structure</keyword>
<keyword id="KW-0067">ATP-binding</keyword>
<keyword id="KW-0963">Cytoplasm</keyword>
<keyword id="KW-0342">GTP-binding</keyword>
<keyword id="KW-0460">Magnesium</keyword>
<keyword id="KW-0479">Metal-binding</keyword>
<keyword id="KW-0547">Nucleotide-binding</keyword>
<keyword id="KW-1185">Reference proteome</keyword>
<evidence type="ECO:0000255" key="1">
    <source>
        <dbReference type="HAMAP-Rule" id="MF_00900"/>
    </source>
</evidence>
<evidence type="ECO:0000269" key="2">
    <source>
    </source>
</evidence>
<evidence type="ECO:0000269" key="3">
    <source>
    </source>
</evidence>
<evidence type="ECO:0000269" key="4">
    <source>
    </source>
</evidence>
<evidence type="ECO:0000305" key="5"/>
<comment type="function">
    <text evidence="1 2 3 4">GTPase that associates with the 50S ribosomal subunit and may have a role during protein synthesis or ribosome biogenesis. In vitro, also exhibits ATPase activity.</text>
</comment>
<comment type="cofactor">
    <cofactor evidence="1">
        <name>Mg(2+)</name>
        <dbReference type="ChEBI" id="CHEBI:18420"/>
    </cofactor>
</comment>
<comment type="activity regulation">
    <text evidence="2 3 4">Intrinsic GTPase activity is very slow and can be stimulated by the presence of 50S ribosomal subunits or 70S ribosomes. GTPase activity is inhibited by ATP.</text>
</comment>
<comment type="subunit">
    <text evidence="1 2 3">Monomer. Associates with the 50S ribosomal subunit. This interaction occurs in the presence of GTP, GDP, ATP or ADP, but not in their absence.</text>
</comment>
<comment type="subcellular location">
    <subcellularLocation>
        <location evidence="1 3">Cytoplasm</location>
    </subcellularLocation>
    <text>May associate with membranes.</text>
</comment>
<comment type="domain">
    <text evidence="2">Full-length protein is required for specific association with the 50S ribosomal subunit.</text>
</comment>
<comment type="disruption phenotype">
    <text evidence="3">Disruption does not affect lambda lysogeny or the transposition frequency of transposable elements.</text>
</comment>
<comment type="similarity">
    <text evidence="1">Belongs to the TRAFAC class OBG-HflX-like GTPase superfamily. HflX GTPase family.</text>
</comment>
<comment type="sequence caution" evidence="5">
    <conflict type="frameshift">
        <sequence resource="EMBL-CDS" id="BAA00645"/>
    </conflict>
</comment>